<sequence>QADPNAFYGLM</sequence>
<reference key="1">
    <citation type="journal article" date="1996" name="Aust. J. Chem.">
        <title>Novel uperin peptides from the dorsal glands of the australian floodplain toadlet Uperoleia inundata.</title>
        <authorList>
            <person name="Bradford A.M."/>
            <person name="Raftery M.J."/>
            <person name="Bowie J.H."/>
            <person name="Tyler M.J."/>
            <person name="Wallace J.C."/>
            <person name="Adams G.W."/>
            <person name="Severini C."/>
        </authorList>
    </citation>
    <scope>PROTEIN SEQUENCE</scope>
    <scope>PYROGLUTAMATE FORMATION AT GLN-1</scope>
    <scope>AMIDATION AT MET-11</scope>
    <scope>MASS SPECTROMETRY</scope>
    <source>
        <tissue>Skin secretion</tissue>
    </source>
</reference>
<keyword id="KW-0027">Amidation</keyword>
<keyword id="KW-0878">Amphibian defense peptide</keyword>
<keyword id="KW-0903">Direct protein sequencing</keyword>
<keyword id="KW-0527">Neuropeptide</keyword>
<keyword id="KW-0873">Pyrrolidone carboxylic acid</keyword>
<keyword id="KW-0964">Secreted</keyword>
<organism>
    <name type="scientific">Uperoleia inundata</name>
    <name type="common">Floodplain toadlet</name>
    <dbReference type="NCBI Taxonomy" id="104953"/>
    <lineage>
        <taxon>Eukaryota</taxon>
        <taxon>Metazoa</taxon>
        <taxon>Chordata</taxon>
        <taxon>Craniata</taxon>
        <taxon>Vertebrata</taxon>
        <taxon>Euteleostomi</taxon>
        <taxon>Amphibia</taxon>
        <taxon>Batrachia</taxon>
        <taxon>Anura</taxon>
        <taxon>Neobatrachia</taxon>
        <taxon>Myobatrachoidea</taxon>
        <taxon>Myobatrachidae</taxon>
        <taxon>Myobatrachinae</taxon>
        <taxon>Uperoleia</taxon>
    </lineage>
</organism>
<protein>
    <recommendedName>
        <fullName>Uperin-1.1</fullName>
    </recommendedName>
</protein>
<name>TKN1_UPEIN</name>
<evidence type="ECO:0000269" key="1">
    <source ref="1"/>
</evidence>
<evidence type="ECO:0000305" key="2"/>
<dbReference type="GO" id="GO:0005576">
    <property type="term" value="C:extracellular region"/>
    <property type="evidence" value="ECO:0007669"/>
    <property type="project" value="UniProtKB-SubCell"/>
</dbReference>
<dbReference type="GO" id="GO:0006952">
    <property type="term" value="P:defense response"/>
    <property type="evidence" value="ECO:0007669"/>
    <property type="project" value="UniProtKB-KW"/>
</dbReference>
<dbReference type="GO" id="GO:0007218">
    <property type="term" value="P:neuropeptide signaling pathway"/>
    <property type="evidence" value="ECO:0007669"/>
    <property type="project" value="UniProtKB-KW"/>
</dbReference>
<dbReference type="GO" id="GO:0007217">
    <property type="term" value="P:tachykinin receptor signaling pathway"/>
    <property type="evidence" value="ECO:0007669"/>
    <property type="project" value="InterPro"/>
</dbReference>
<dbReference type="InterPro" id="IPR013055">
    <property type="entry name" value="Tachy_Neuro_lke_CS"/>
</dbReference>
<dbReference type="InterPro" id="IPR008215">
    <property type="entry name" value="Tachykinin_dom"/>
</dbReference>
<dbReference type="Pfam" id="PF02202">
    <property type="entry name" value="Tachykinin"/>
    <property type="match status" value="1"/>
</dbReference>
<dbReference type="PROSITE" id="PS00267">
    <property type="entry name" value="TACHYKININ"/>
    <property type="match status" value="1"/>
</dbReference>
<accession>P82026</accession>
<proteinExistence type="evidence at protein level"/>
<feature type="peptide" id="PRO_0000044413" description="Uperin-1.1">
    <location>
        <begin position="1"/>
        <end position="11"/>
    </location>
</feature>
<feature type="modified residue" description="Pyrrolidone carboxylic acid" evidence="1">
    <location>
        <position position="1"/>
    </location>
</feature>
<feature type="modified residue" description="Methionine amide" evidence="1">
    <location>
        <position position="11"/>
    </location>
</feature>
<comment type="function">
    <text>Tachykinins are active peptides which excite neurons, evoke behavioral responses, are potent vasodilators and secretagogues, and contract (directly or indirectly) many smooth muscles.</text>
</comment>
<comment type="subcellular location">
    <subcellularLocation>
        <location>Secreted</location>
    </subcellularLocation>
</comment>
<comment type="tissue specificity">
    <text>Expressed by the skin dorsal glands.</text>
</comment>
<comment type="mass spectrometry"/>
<comment type="similarity">
    <text evidence="2">Belongs to the tachykinin family.</text>
</comment>